<reference key="1">
    <citation type="journal article" date="2022" name="Proc. Natl. Acad. Sci. U.S.A.">
        <title>Fungal gasdermin-like proteins are controlled by proteolytic cleavage.</title>
        <authorList>
            <person name="Clave C."/>
            <person name="Dyrka W."/>
            <person name="Turcotte E.A."/>
            <person name="Granger-Farbos A."/>
            <person name="Ibarlosa L."/>
            <person name="Pinson B."/>
            <person name="Vance R.E."/>
            <person name="Saupe S.J."/>
            <person name="Daskalov A."/>
        </authorList>
    </citation>
    <scope>NUCLEOTIDE SEQUENCE [GENOMIC DNA]</scope>
    <scope>MUTAGENESIS OF HIS-105 AND SER-266</scope>
</reference>
<organism>
    <name type="scientific">Podospora anserina</name>
    <name type="common">Pleurage anserina</name>
    <dbReference type="NCBI Taxonomy" id="2587412"/>
    <lineage>
        <taxon>Eukaryota</taxon>
        <taxon>Fungi</taxon>
        <taxon>Dikarya</taxon>
        <taxon>Ascomycota</taxon>
        <taxon>Pezizomycotina</taxon>
        <taxon>Sordariomycetes</taxon>
        <taxon>Sordariomycetidae</taxon>
        <taxon>Sordariales</taxon>
        <taxon>Podosporaceae</taxon>
        <taxon>Podospora</taxon>
    </lineage>
</organism>
<name>HETQ2_PODAS</name>
<accession>P0DW09</accession>
<dbReference type="EC" id="3.4.21.-" evidence="4"/>
<dbReference type="EMBL" id="MZ576188">
    <property type="protein sequence ID" value="UJY53792.1"/>
    <property type="molecule type" value="Genomic_DNA"/>
</dbReference>
<dbReference type="SMR" id="P0DW09"/>
<dbReference type="GO" id="GO:0016020">
    <property type="term" value="C:membrane"/>
    <property type="evidence" value="ECO:0007669"/>
    <property type="project" value="UniProtKB-SubCell"/>
</dbReference>
<dbReference type="GO" id="GO:0004252">
    <property type="term" value="F:serine-type endopeptidase activity"/>
    <property type="evidence" value="ECO:0000314"/>
    <property type="project" value="UniProtKB"/>
</dbReference>
<dbReference type="GO" id="GO:0006508">
    <property type="term" value="P:proteolysis"/>
    <property type="evidence" value="ECO:0007669"/>
    <property type="project" value="UniProtKB-KW"/>
</dbReference>
<dbReference type="Gene3D" id="3.40.50.200">
    <property type="entry name" value="Peptidase S8/S53 domain"/>
    <property type="match status" value="1"/>
</dbReference>
<dbReference type="InterPro" id="IPR000209">
    <property type="entry name" value="Peptidase_S8/S53_dom"/>
</dbReference>
<dbReference type="InterPro" id="IPR036852">
    <property type="entry name" value="Peptidase_S8/S53_dom_sf"/>
</dbReference>
<dbReference type="InterPro" id="IPR023827">
    <property type="entry name" value="Peptidase_S8_Asp-AS"/>
</dbReference>
<dbReference type="InterPro" id="IPR050131">
    <property type="entry name" value="Peptidase_S8_subtilisin-like"/>
</dbReference>
<dbReference type="InterPro" id="IPR015500">
    <property type="entry name" value="Peptidase_S8_subtilisin-rel"/>
</dbReference>
<dbReference type="PANTHER" id="PTHR43806:SF11">
    <property type="entry name" value="CEREVISIN-RELATED"/>
    <property type="match status" value="1"/>
</dbReference>
<dbReference type="PANTHER" id="PTHR43806">
    <property type="entry name" value="PEPTIDASE S8"/>
    <property type="match status" value="1"/>
</dbReference>
<dbReference type="Pfam" id="PF00082">
    <property type="entry name" value="Peptidase_S8"/>
    <property type="match status" value="1"/>
</dbReference>
<dbReference type="PRINTS" id="PR00723">
    <property type="entry name" value="SUBTILISIN"/>
</dbReference>
<dbReference type="SUPFAM" id="SSF52743">
    <property type="entry name" value="Subtilisin-like"/>
    <property type="match status" value="1"/>
</dbReference>
<dbReference type="PROSITE" id="PS51892">
    <property type="entry name" value="SUBTILASE"/>
    <property type="match status" value="1"/>
</dbReference>
<dbReference type="PROSITE" id="PS00136">
    <property type="entry name" value="SUBTILASE_ASP"/>
    <property type="match status" value="1"/>
</dbReference>
<keyword id="KW-0378">Hydrolase</keyword>
<keyword id="KW-0472">Membrane</keyword>
<keyword id="KW-0645">Protease</keyword>
<keyword id="KW-0720">Serine protease</keyword>
<keyword id="KW-0812">Transmembrane</keyword>
<keyword id="KW-1133">Transmembrane helix</keyword>
<proteinExistence type="evidence at protein level"/>
<comment type="function">
    <text evidence="4">Serine protease involved in heterokaryon incompatibility, a process that ensures that during spontaneous vegetative cell fusion, only compatible cells from the same colony survive (non-self-recognition) (PubMed:35135876). In P.anserina, the het-q locus exists as 2 incompatible alleles, het-Q1 (AC B2AXJ5) and het-Q2 (this entry) (PubMed:35135876). Prevents cell fusion with strains containing the gasdermin-like protein het-Q1 by mediating proteolytic cleavage and maturation of het-Q1 during the allorecognition process, thereby triggering cell death (PubMed:35135876).</text>
</comment>
<comment type="subcellular location">
    <subcellularLocation>
        <location evidence="1">Membrane</location>
        <topology evidence="1">Single-pass membrane protein</topology>
    </subcellularLocation>
</comment>
<comment type="similarity">
    <text evidence="6">Belongs to the peptidase S8 family.</text>
</comment>
<evidence type="ECO:0000255" key="1"/>
<evidence type="ECO:0000255" key="2">
    <source>
        <dbReference type="PROSITE-ProRule" id="PRU01240"/>
    </source>
</evidence>
<evidence type="ECO:0000256" key="3">
    <source>
        <dbReference type="SAM" id="MobiDB-lite"/>
    </source>
</evidence>
<evidence type="ECO:0000269" key="4">
    <source>
    </source>
</evidence>
<evidence type="ECO:0000303" key="5">
    <source>
    </source>
</evidence>
<evidence type="ECO:0000305" key="6"/>
<evidence type="ECO:0000305" key="7">
    <source>
    </source>
</evidence>
<feature type="chain" id="PRO_0000455985" description="Subtilisin-like protease het-Q2">
    <location>
        <begin position="1"/>
        <end position="366"/>
    </location>
</feature>
<feature type="transmembrane region" description="Helical" evidence="1">
    <location>
        <begin position="261"/>
        <end position="283"/>
    </location>
</feature>
<feature type="domain" description="Peptidase S8" evidence="2">
    <location>
        <begin position="1"/>
        <end position="321"/>
    </location>
</feature>
<feature type="region of interest" description="Disordered" evidence="3">
    <location>
        <begin position="79"/>
        <end position="98"/>
    </location>
</feature>
<feature type="compositionally biased region" description="Pro residues" evidence="3">
    <location>
        <begin position="83"/>
        <end position="96"/>
    </location>
</feature>
<feature type="active site" description="Charge relay system" evidence="2">
    <location>
        <position position="35"/>
    </location>
</feature>
<feature type="active site" description="Charge relay system" evidence="2 7">
    <location>
        <position position="105"/>
    </location>
</feature>
<feature type="active site" description="Charge relay system" evidence="2 7">
    <location>
        <position position="266"/>
    </location>
</feature>
<feature type="mutagenesis site" description="Abolished ability to trigger cell death during the allorecognition process." evidence="4">
    <original>H</original>
    <variation>A</variation>
    <location>
        <position position="105"/>
    </location>
</feature>
<feature type="mutagenesis site" description="Abolished ability to trigger cell death during the allorecognition process." evidence="4">
    <original>S</original>
    <variation>A</variation>
    <location>
        <position position="266"/>
    </location>
</feature>
<protein>
    <recommendedName>
        <fullName evidence="6">Subtilisin-like protease het-Q2</fullName>
        <ecNumber evidence="4">3.4.21.-</ecNumber>
    </recommendedName>
    <alternativeName>
        <fullName evidence="5">Heterokaryon incompatibility protein Q2</fullName>
    </alternativeName>
</protein>
<sequence>MSAISHHSLSHLNSTVSKRLMPTYSDPVVRIAVLDTGFDGSHPDFSHPRTAYFTGPFSDLPQPEKDEEPQLTRIKAYHDFCQPSPPGDRQGPPPQPHSMVDLAGHGTAIAGLILRLAPRAELVIGRVCHGVDSNELSAPDPSRVAAAIRWAITQKVHIINLSLGYRNQPLKELLPLRAALLEAQRSNILVFASTSNQGSHEPAAWPASDARFAIGVHSCNDMGSAPSGSSCKASENGYNFMAVGENLLVHRLAQKGGGFELVSGSSFATPVVVSVAALVLAFVWQEECKRERDEVGREVMLEDLGSLGGMGRVLMALGEKTAGSYWAVGMKLFWAGYREGDGRDPEKEEKEARRWAWGVLRGAVAY</sequence>
<gene>
    <name evidence="5" type="primary">het-Q2</name>
</gene>